<organism>
    <name type="scientific">Burkholderia mallei (strain NCTC 10229)</name>
    <dbReference type="NCBI Taxonomy" id="412022"/>
    <lineage>
        <taxon>Bacteria</taxon>
        <taxon>Pseudomonadati</taxon>
        <taxon>Pseudomonadota</taxon>
        <taxon>Betaproteobacteria</taxon>
        <taxon>Burkholderiales</taxon>
        <taxon>Burkholderiaceae</taxon>
        <taxon>Burkholderia</taxon>
        <taxon>pseudomallei group</taxon>
    </lineage>
</organism>
<accession>A2S1P8</accession>
<accession>A2S1P6</accession>
<keyword id="KW-1003">Cell membrane</keyword>
<keyword id="KW-0472">Membrane</keyword>
<keyword id="KW-0812">Transmembrane</keyword>
<keyword id="KW-1133">Transmembrane helix</keyword>
<keyword id="KW-0843">Virulence</keyword>
<evidence type="ECO:0000250" key="1"/>
<evidence type="ECO:0000255" key="2"/>
<evidence type="ECO:0000256" key="3">
    <source>
        <dbReference type="SAM" id="MobiDB-lite"/>
    </source>
</evidence>
<evidence type="ECO:0000305" key="4"/>
<name>BSAZ_BURM9</name>
<protein>
    <recommendedName>
        <fullName>Secretion apparatus protein BsaZ</fullName>
    </recommendedName>
</protein>
<sequence length="411" mass="44494">MAEKTEKPTAKKLRDAAKKGQTFKARDIVALIVIATGALAAPALVDLTRIAAEFVRIASTGAQSNPGAYAFAWAKLFLRIAAPFVLLCAAAGALPSLVQSRFTLAVESIRFDLTALDPVKGMKRLFSWRSAKDAVKALLYVGVFALTVRVFADLYHADVFGLFRARPALLGHMWIVLTVRLVLLFLLCALPVLILDAAVEYFLYHRELKMDKHEVKQEYKESEGNHEIKSKRREIHQELLSEEIKANVEQSDFIVANPTHIAIGVYVNPDIVPIPFVSVRETNARALAVIRHAEACGVPVVRNVALARSIYRNSPRRYSFVSHDDIDGVMRVLIWLGEVEAANRGGPPPETRAPTSAEPQARDGVAPLGDACADNAFPDDAPPGAAAPNAGSPDSPAPDGGAPARTGDQNA</sequence>
<dbReference type="EMBL" id="CP000545">
    <property type="protein sequence ID" value="ABM99347.2"/>
    <property type="molecule type" value="Genomic_DNA"/>
</dbReference>
<dbReference type="RefSeq" id="WP_004188512.1">
    <property type="nucleotide sequence ID" value="NC_008835.1"/>
</dbReference>
<dbReference type="SMR" id="A2S1P8"/>
<dbReference type="GeneID" id="92975827"/>
<dbReference type="KEGG" id="bml:BMA10229_2069"/>
<dbReference type="HOGENOM" id="CLU_041013_1_3_4"/>
<dbReference type="Proteomes" id="UP000002283">
    <property type="component" value="Chromosome II"/>
</dbReference>
<dbReference type="GO" id="GO:0005886">
    <property type="term" value="C:plasma membrane"/>
    <property type="evidence" value="ECO:0007669"/>
    <property type="project" value="UniProtKB-SubCell"/>
</dbReference>
<dbReference type="GO" id="GO:0009306">
    <property type="term" value="P:protein secretion"/>
    <property type="evidence" value="ECO:0007669"/>
    <property type="project" value="InterPro"/>
</dbReference>
<dbReference type="Gene3D" id="6.10.250.2080">
    <property type="match status" value="1"/>
</dbReference>
<dbReference type="Gene3D" id="3.40.1690.10">
    <property type="entry name" value="secretion proteins EscU"/>
    <property type="match status" value="1"/>
</dbReference>
<dbReference type="InterPro" id="IPR006307">
    <property type="entry name" value="BsaZ-like"/>
</dbReference>
<dbReference type="InterPro" id="IPR006135">
    <property type="entry name" value="T3SS_substrate_exporter"/>
</dbReference>
<dbReference type="InterPro" id="IPR029025">
    <property type="entry name" value="T3SS_substrate_exporter_C"/>
</dbReference>
<dbReference type="NCBIfam" id="TIGR01404">
    <property type="entry name" value="FlhB_rel_III"/>
    <property type="match status" value="1"/>
</dbReference>
<dbReference type="NCBIfam" id="NF006017">
    <property type="entry name" value="PRK08156.1"/>
    <property type="match status" value="1"/>
</dbReference>
<dbReference type="PANTHER" id="PTHR30531">
    <property type="entry name" value="FLAGELLAR BIOSYNTHETIC PROTEIN FLHB"/>
    <property type="match status" value="1"/>
</dbReference>
<dbReference type="PANTHER" id="PTHR30531:SF14">
    <property type="entry name" value="SURFACE PRESENTATION OF ANTIGENS PROTEIN SPAS"/>
    <property type="match status" value="1"/>
</dbReference>
<dbReference type="Pfam" id="PF01312">
    <property type="entry name" value="Bac_export_2"/>
    <property type="match status" value="1"/>
</dbReference>
<dbReference type="PRINTS" id="PR00950">
    <property type="entry name" value="TYPE3IMSPROT"/>
</dbReference>
<dbReference type="SUPFAM" id="SSF160544">
    <property type="entry name" value="EscU C-terminal domain-like"/>
    <property type="match status" value="1"/>
</dbReference>
<comment type="function">
    <text evidence="1">Part of the bsa type III secretion system, is involved in the intracellular replication of invading bacteria inside the host cell. Probably necessary for the lysis of the vacuole membrane and escape into the host cell cytoplasm (By similarity).</text>
</comment>
<comment type="subcellular location">
    <subcellularLocation>
        <location evidence="4">Cell membrane</location>
        <topology evidence="4">Multi-pass membrane protein</topology>
    </subcellularLocation>
</comment>
<comment type="similarity">
    <text evidence="4">Belongs to the type III secretion exporter family.</text>
</comment>
<gene>
    <name type="primary">bsaZ</name>
    <name type="ordered locus">BMA10229_2069</name>
</gene>
<feature type="chain" id="PRO_0000344013" description="Secretion apparatus protein BsaZ">
    <location>
        <begin position="1"/>
        <end position="411"/>
    </location>
</feature>
<feature type="transmembrane region" description="Helical" evidence="2">
    <location>
        <begin position="28"/>
        <end position="48"/>
    </location>
</feature>
<feature type="transmembrane region" description="Helical" evidence="2">
    <location>
        <begin position="80"/>
        <end position="100"/>
    </location>
</feature>
<feature type="transmembrane region" description="Helical" evidence="2">
    <location>
        <begin position="137"/>
        <end position="157"/>
    </location>
</feature>
<feature type="transmembrane region" description="Helical" evidence="2">
    <location>
        <begin position="175"/>
        <end position="195"/>
    </location>
</feature>
<feature type="region of interest" description="Disordered" evidence="3">
    <location>
        <begin position="341"/>
        <end position="411"/>
    </location>
</feature>
<feature type="compositionally biased region" description="Low complexity" evidence="3">
    <location>
        <begin position="370"/>
        <end position="404"/>
    </location>
</feature>
<proteinExistence type="inferred from homology"/>
<reference key="1">
    <citation type="journal article" date="2010" name="Genome Biol. Evol.">
        <title>Continuing evolution of Burkholderia mallei through genome reduction and large-scale rearrangements.</title>
        <authorList>
            <person name="Losada L."/>
            <person name="Ronning C.M."/>
            <person name="DeShazer D."/>
            <person name="Woods D."/>
            <person name="Fedorova N."/>
            <person name="Kim H.S."/>
            <person name="Shabalina S.A."/>
            <person name="Pearson T.R."/>
            <person name="Brinkac L."/>
            <person name="Tan P."/>
            <person name="Nandi T."/>
            <person name="Crabtree J."/>
            <person name="Badger J."/>
            <person name="Beckstrom-Sternberg S."/>
            <person name="Saqib M."/>
            <person name="Schutzer S.E."/>
            <person name="Keim P."/>
            <person name="Nierman W.C."/>
        </authorList>
    </citation>
    <scope>NUCLEOTIDE SEQUENCE [LARGE SCALE GENOMIC DNA]</scope>
    <source>
        <strain>NCTC 10229</strain>
    </source>
</reference>